<reference key="1">
    <citation type="journal article" date="2002" name="Proc. Natl. Acad. Sci. U.S.A.">
        <title>The genome sequence of the facultative intracellular pathogen Brucella melitensis.</title>
        <authorList>
            <person name="DelVecchio V.G."/>
            <person name="Kapatral V."/>
            <person name="Redkar R.J."/>
            <person name="Patra G."/>
            <person name="Mujer C."/>
            <person name="Los T."/>
            <person name="Ivanova N."/>
            <person name="Anderson I."/>
            <person name="Bhattacharyya A."/>
            <person name="Lykidis A."/>
            <person name="Reznik G."/>
            <person name="Jablonski L."/>
            <person name="Larsen N."/>
            <person name="D'Souza M."/>
            <person name="Bernal A."/>
            <person name="Mazur M."/>
            <person name="Goltsman E."/>
            <person name="Selkov E."/>
            <person name="Elzer P.H."/>
            <person name="Hagius S."/>
            <person name="O'Callaghan D."/>
            <person name="Letesson J.-J."/>
            <person name="Haselkorn R."/>
            <person name="Kyrpides N.C."/>
            <person name="Overbeek R."/>
        </authorList>
    </citation>
    <scope>NUCLEOTIDE SEQUENCE [LARGE SCALE GENOMIC DNA]</scope>
    <source>
        <strain>ATCC 23456 / CCUG 17765 / NCTC 10094 / 16M</strain>
    </source>
</reference>
<comment type="function">
    <text evidence="1">Involved in DNA repair and RecF pathway recombination.</text>
</comment>
<comment type="similarity">
    <text evidence="2">Belongs to the RecO family.</text>
</comment>
<evidence type="ECO:0000250" key="1"/>
<evidence type="ECO:0000305" key="2"/>
<name>RECO_BRUME</name>
<organism>
    <name type="scientific">Brucella melitensis biotype 1 (strain ATCC 23456 / CCUG 17765 / NCTC 10094 / 16M)</name>
    <dbReference type="NCBI Taxonomy" id="224914"/>
    <lineage>
        <taxon>Bacteria</taxon>
        <taxon>Pseudomonadati</taxon>
        <taxon>Pseudomonadota</taxon>
        <taxon>Alphaproteobacteria</taxon>
        <taxon>Hyphomicrobiales</taxon>
        <taxon>Brucellaceae</taxon>
        <taxon>Brucella/Ochrobactrum group</taxon>
        <taxon>Brucella</taxon>
    </lineage>
</organism>
<keyword id="KW-0227">DNA damage</keyword>
<keyword id="KW-0233">DNA recombination</keyword>
<keyword id="KW-0234">DNA repair</keyword>
<protein>
    <recommendedName>
        <fullName>DNA repair protein RecO</fullName>
    </recommendedName>
    <alternativeName>
        <fullName>Recombination protein O</fullName>
    </alternativeName>
</protein>
<dbReference type="EMBL" id="AE008917">
    <property type="protein sequence ID" value="AAL52466.1"/>
    <property type="molecule type" value="Genomic_DNA"/>
</dbReference>
<dbReference type="PIR" id="AG3412">
    <property type="entry name" value="AG3412"/>
</dbReference>
<dbReference type="RefSeq" id="WP_004683400.1">
    <property type="nucleotide sequence ID" value="NC_003317.1"/>
</dbReference>
<dbReference type="SMR" id="Q8YG76"/>
<dbReference type="GeneID" id="29594131"/>
<dbReference type="KEGG" id="bme:BMEI1285"/>
<dbReference type="KEGG" id="bmel:DK63_121"/>
<dbReference type="PATRIC" id="fig|224914.52.peg.125"/>
<dbReference type="eggNOG" id="COG1381">
    <property type="taxonomic scope" value="Bacteria"/>
</dbReference>
<dbReference type="PhylomeDB" id="Q8YG76"/>
<dbReference type="Proteomes" id="UP000000419">
    <property type="component" value="Chromosome I"/>
</dbReference>
<dbReference type="GO" id="GO:0043590">
    <property type="term" value="C:bacterial nucleoid"/>
    <property type="evidence" value="ECO:0007669"/>
    <property type="project" value="TreeGrafter"/>
</dbReference>
<dbReference type="GO" id="GO:0006310">
    <property type="term" value="P:DNA recombination"/>
    <property type="evidence" value="ECO:0007669"/>
    <property type="project" value="UniProtKB-UniRule"/>
</dbReference>
<dbReference type="GO" id="GO:0006302">
    <property type="term" value="P:double-strand break repair"/>
    <property type="evidence" value="ECO:0007669"/>
    <property type="project" value="TreeGrafter"/>
</dbReference>
<dbReference type="Gene3D" id="2.40.50.140">
    <property type="entry name" value="Nucleic acid-binding proteins"/>
    <property type="match status" value="1"/>
</dbReference>
<dbReference type="Gene3D" id="1.20.1440.120">
    <property type="entry name" value="Recombination protein O, C-terminal domain"/>
    <property type="match status" value="1"/>
</dbReference>
<dbReference type="HAMAP" id="MF_00201">
    <property type="entry name" value="RecO"/>
    <property type="match status" value="1"/>
</dbReference>
<dbReference type="InterPro" id="IPR037278">
    <property type="entry name" value="ARFGAP/RecO"/>
</dbReference>
<dbReference type="InterPro" id="IPR022572">
    <property type="entry name" value="DNA_rep/recomb_RecO_N"/>
</dbReference>
<dbReference type="InterPro" id="IPR012340">
    <property type="entry name" value="NA-bd_OB-fold"/>
</dbReference>
<dbReference type="InterPro" id="IPR003717">
    <property type="entry name" value="RecO"/>
</dbReference>
<dbReference type="InterPro" id="IPR042242">
    <property type="entry name" value="RecO_C"/>
</dbReference>
<dbReference type="NCBIfam" id="TIGR00613">
    <property type="entry name" value="reco"/>
    <property type="match status" value="1"/>
</dbReference>
<dbReference type="PANTHER" id="PTHR33991">
    <property type="entry name" value="DNA REPAIR PROTEIN RECO"/>
    <property type="match status" value="1"/>
</dbReference>
<dbReference type="PANTHER" id="PTHR33991:SF1">
    <property type="entry name" value="DNA REPAIR PROTEIN RECO"/>
    <property type="match status" value="1"/>
</dbReference>
<dbReference type="Pfam" id="PF02565">
    <property type="entry name" value="RecO_C"/>
    <property type="match status" value="1"/>
</dbReference>
<dbReference type="Pfam" id="PF11967">
    <property type="entry name" value="RecO_N"/>
    <property type="match status" value="1"/>
</dbReference>
<dbReference type="SUPFAM" id="SSF57863">
    <property type="entry name" value="ArfGap/RecO-like zinc finger"/>
    <property type="match status" value="1"/>
</dbReference>
<dbReference type="SUPFAM" id="SSF50249">
    <property type="entry name" value="Nucleic acid-binding proteins"/>
    <property type="match status" value="1"/>
</dbReference>
<proteinExistence type="inferred from homology"/>
<accession>Q8YG76</accession>
<sequence length="247" mass="27642">MEWRDEGVILGTRRHGETSAIVEVMTCGHGRHMGMVRGGRSRRMQPLLQPGNHVDVSWWARLDEHMGTFTIEPLSFAAARLIETPVALYGIQLAAAHLRLLPERDPHRGLYETLRLIIEHFDDPLAAGELLLRFEVMMLEELGFGLDLKECAATGRKDDLIYVSPTSGRAVCREAGAPWAEKLLSLPSFVNDTALRASCYDDLDRAFTMTGYFLMRHVWEPRAQTPPDSRSGFLNAVGRAINLSQAS</sequence>
<gene>
    <name type="primary">recO</name>
    <name type="ordered locus">BMEI1285</name>
</gene>
<feature type="chain" id="PRO_0000204937" description="DNA repair protein RecO">
    <location>
        <begin position="1"/>
        <end position="247"/>
    </location>
</feature>